<reference evidence="11" key="1">
    <citation type="journal article" date="2007" name="Insect Biochem. Mol. Biol.">
        <title>An insight into the sialome of the adult female mosquito Aedes albopictus.</title>
        <authorList>
            <person name="Arca B."/>
            <person name="Lombardo F."/>
            <person name="Francischetti I.M."/>
            <person name="Pham V.M."/>
            <person name="Mestres-Simon M."/>
            <person name="Andersen J.F."/>
            <person name="Ribeiro J.M."/>
        </authorList>
    </citation>
    <scope>NUCLEOTIDE SEQUENCE [LARGE SCALE MRNA]</scope>
    <scope>PROTEIN SEQUENCE OF 21-31</scope>
    <scope>TISSUE SPECIFICITY</scope>
    <source>
        <tissue evidence="11">Salivary gland</tissue>
    </source>
</reference>
<reference evidence="10" key="2">
    <citation type="journal article" date="2013" name="Insect Mol. Biol.">
        <title>First screening of Aedes albopictus immunogenic salivary proteins.</title>
        <authorList>
            <person name="Doucoure S."/>
            <person name="Cornelie S."/>
            <person name="Patramool S."/>
            <person name="Mouchet F."/>
            <person name="Demettre E."/>
            <person name="Seveno M."/>
            <person name="Dehecq J.S."/>
            <person name="Rutee H."/>
            <person name="Herve J.P."/>
            <person name="Favier F."/>
            <person name="Misse D."/>
            <person name="Gasque P."/>
            <person name="Remoue F."/>
        </authorList>
    </citation>
    <scope>IDENTIFICATION BY MASS SPECTROMETRY</scope>
    <scope>TISSUE SPECIFICITY</scope>
</reference>
<reference evidence="10" key="3">
    <citation type="journal article" date="2022" name="Bioengineered">
        <title>Aedes albopictus salivary proteins adenosine deaminase and 34k2 interact with human mast cell specific proteases tryptase and chymase.</title>
        <authorList>
            <person name="Li Z."/>
            <person name="Ji C."/>
            <person name="Cheng J."/>
            <person name="Aabrink M."/>
            <person name="Shen T."/>
            <person name="Kuang X."/>
            <person name="Shang Z."/>
            <person name="Wu J."/>
        </authorList>
    </citation>
    <scope>FUNCTION</scope>
    <scope>PROTEOLYTIC CLEAVAGE</scope>
</reference>
<reference evidence="10" key="4">
    <citation type="journal article" date="2023" name="Sci. Rep.">
        <title>Aedes albopictus salivary adenosine deaminase is an immunomodulatory factor facilitating dengue virus replication.</title>
        <authorList>
            <person name="Mu X."/>
            <person name="Lin Z."/>
            <person name="Sun Y."/>
            <person name="Chen L."/>
            <person name="Lv Q."/>
            <person name="Ji C."/>
            <person name="Kuang X."/>
            <person name="Li W."/>
            <person name="Shang Z."/>
            <person name="Cheng J."/>
            <person name="Nie Y."/>
            <person name="Li Z."/>
            <person name="Wu J."/>
        </authorList>
    </citation>
    <scope>IDENTIFICATION BY MASS SPECTROMETRY</scope>
    <scope>FUNCTION</scope>
    <scope>FUNCTION (MICROBIAL INFECTION)</scope>
    <scope>CATALYTIC ACTIVITY</scope>
    <scope>TISSUE SPECIFICITY</scope>
    <scope>INDUCTION BY BLOOD FEEDING</scope>
</reference>
<evidence type="ECO:0000250" key="1">
    <source>
        <dbReference type="UniProtKB" id="Q9NZK5"/>
    </source>
</evidence>
<evidence type="ECO:0000255" key="2"/>
<evidence type="ECO:0000269" key="3">
    <source>
    </source>
</evidence>
<evidence type="ECO:0000269" key="4">
    <source>
    </source>
</evidence>
<evidence type="ECO:0000269" key="5">
    <source>
    </source>
</evidence>
<evidence type="ECO:0000269" key="6">
    <source>
    </source>
</evidence>
<evidence type="ECO:0000303" key="7">
    <source>
    </source>
</evidence>
<evidence type="ECO:0000303" key="8">
    <source>
    </source>
</evidence>
<evidence type="ECO:0000303" key="9">
    <source>
    </source>
</evidence>
<evidence type="ECO:0000305" key="10"/>
<evidence type="ECO:0000312" key="11">
    <source>
        <dbReference type="EMBL" id="AAV90660.1"/>
    </source>
</evidence>
<accession>Q5MIX2</accession>
<keyword id="KW-0903">Direct protein sequencing</keyword>
<keyword id="KW-0378">Hydrolase</keyword>
<keyword id="KW-0479">Metal-binding</keyword>
<keyword id="KW-0546">Nucleotide metabolism</keyword>
<keyword id="KW-0964">Secreted</keyword>
<keyword id="KW-0732">Signal</keyword>
<name>ADA_AEDAL</name>
<organism evidence="11">
    <name type="scientific">Aedes albopictus</name>
    <name type="common">Asian tiger mosquito</name>
    <name type="synonym">Stegomyia albopicta</name>
    <dbReference type="NCBI Taxonomy" id="7160"/>
    <lineage>
        <taxon>Eukaryota</taxon>
        <taxon>Metazoa</taxon>
        <taxon>Ecdysozoa</taxon>
        <taxon>Arthropoda</taxon>
        <taxon>Hexapoda</taxon>
        <taxon>Insecta</taxon>
        <taxon>Pterygota</taxon>
        <taxon>Neoptera</taxon>
        <taxon>Endopterygota</taxon>
        <taxon>Diptera</taxon>
        <taxon>Nematocera</taxon>
        <taxon>Culicoidea</taxon>
        <taxon>Culicidae</taxon>
        <taxon>Culicinae</taxon>
        <taxon>Aedini</taxon>
        <taxon>Aedes</taxon>
        <taxon>Stegomyia</taxon>
    </lineage>
</organism>
<comment type="function">
    <text evidence="5 6">Catalyzes the deamination of adenosine to inosine and deoxyadenosine to deoxyinosine (PubMed:37794048). Induces degranulation of host mast cells, and secretion of tryptase and IL6 (PubMed:35746853). Modulates enzymatic activities of human tryptase and chymase (PubMed:35746853). Induces release of cytokines, such as IL1B, IL6, TNF, CCL2, IFN-beta (INFB1) and ISG15, from host monocytes and macrophages (PubMed:37794048). Activates host NF-kappa-B signaling pathway in TAK1/MAP3K7-dependent manner (PubMed:37794048).</text>
</comment>
<comment type="function">
    <text evidence="6">(Microbial infection) Promotes replication of dengue virus type 2 in host cells probably via modulation of cytokine production in host macrophages and monocytes.</text>
</comment>
<comment type="catalytic activity">
    <reaction evidence="6">
        <text>adenosine + H2O + H(+) = inosine + NH4(+)</text>
        <dbReference type="Rhea" id="RHEA:24408"/>
        <dbReference type="ChEBI" id="CHEBI:15377"/>
        <dbReference type="ChEBI" id="CHEBI:15378"/>
        <dbReference type="ChEBI" id="CHEBI:16335"/>
        <dbReference type="ChEBI" id="CHEBI:17596"/>
        <dbReference type="ChEBI" id="CHEBI:28938"/>
        <dbReference type="EC" id="3.5.4.4"/>
    </reaction>
</comment>
<comment type="catalytic activity">
    <reaction evidence="6">
        <text>2'-deoxyadenosine + H2O + H(+) = 2'-deoxyinosine + NH4(+)</text>
        <dbReference type="Rhea" id="RHEA:28190"/>
        <dbReference type="ChEBI" id="CHEBI:15377"/>
        <dbReference type="ChEBI" id="CHEBI:15378"/>
        <dbReference type="ChEBI" id="CHEBI:17256"/>
        <dbReference type="ChEBI" id="CHEBI:28938"/>
        <dbReference type="ChEBI" id="CHEBI:28997"/>
        <dbReference type="EC" id="3.5.4.4"/>
    </reaction>
</comment>
<comment type="cofactor">
    <cofactor evidence="1">
        <name>Zn(2+)</name>
        <dbReference type="ChEBI" id="CHEBI:29105"/>
    </cofactor>
</comment>
<comment type="subcellular location">
    <subcellularLocation>
        <location evidence="10">Secreted</location>
    </subcellularLocation>
</comment>
<comment type="tissue specificity">
    <text evidence="3 4 6">Female salivary gland (at protein level).</text>
</comment>
<comment type="induction">
    <text evidence="6">Up-regulated in salivary glands by blood feeding (at protein level).</text>
</comment>
<comment type="PTM">
    <text evidence="5">Proteolytically cleaved by human mast cell tryptase and chymase.</text>
</comment>
<comment type="miscellaneous">
    <text evidence="4">Antibodies against the protein are found in the serum of individuals exposed to Aedes albopictus bites.</text>
</comment>
<comment type="similarity">
    <text evidence="10">Belongs to the metallo-dependent hydrolases superfamily. Adenosine and AMP deaminases family. ADGF subfamily.</text>
</comment>
<protein>
    <recommendedName>
        <fullName evidence="7 8 9">Adenosine deaminase</fullName>
        <shortName evidence="9">ADA</shortName>
        <shortName evidence="8">alADA</shortName>
        <ecNumber evidence="6">3.5.4.4</ecNumber>
    </recommendedName>
</protein>
<dbReference type="EC" id="3.5.4.4" evidence="6"/>
<dbReference type="EMBL" id="AY826088">
    <property type="protein sequence ID" value="AAV90660.1"/>
    <property type="molecule type" value="mRNA"/>
</dbReference>
<dbReference type="SMR" id="Q5MIX2"/>
<dbReference type="VEuPathDB" id="VectorBase:AALC636_007897"/>
<dbReference type="VEuPathDB" id="VectorBase:AALF015746"/>
<dbReference type="VEuPathDB" id="VectorBase:AALFPA_072351"/>
<dbReference type="Proteomes" id="UP000069940">
    <property type="component" value="Unplaced"/>
</dbReference>
<dbReference type="GO" id="GO:0005615">
    <property type="term" value="C:extracellular space"/>
    <property type="evidence" value="ECO:0007669"/>
    <property type="project" value="InterPro"/>
</dbReference>
<dbReference type="GO" id="GO:0004000">
    <property type="term" value="F:adenosine deaminase activity"/>
    <property type="evidence" value="ECO:0007669"/>
    <property type="project" value="InterPro"/>
</dbReference>
<dbReference type="GO" id="GO:0046872">
    <property type="term" value="F:metal ion binding"/>
    <property type="evidence" value="ECO:0007669"/>
    <property type="project" value="UniProtKB-KW"/>
</dbReference>
<dbReference type="GO" id="GO:0006154">
    <property type="term" value="P:adenosine catabolic process"/>
    <property type="evidence" value="ECO:0007669"/>
    <property type="project" value="InterPro"/>
</dbReference>
<dbReference type="GO" id="GO:0046103">
    <property type="term" value="P:inosine biosynthetic process"/>
    <property type="evidence" value="ECO:0007669"/>
    <property type="project" value="TreeGrafter"/>
</dbReference>
<dbReference type="GO" id="GO:0009117">
    <property type="term" value="P:nucleotide metabolic process"/>
    <property type="evidence" value="ECO:0007669"/>
    <property type="project" value="UniProtKB-KW"/>
</dbReference>
<dbReference type="FunFam" id="3.20.20.140:FF:000017">
    <property type="entry name" value="Adenosine deaminase 2"/>
    <property type="match status" value="1"/>
</dbReference>
<dbReference type="Gene3D" id="3.20.20.140">
    <property type="entry name" value="Metal-dependent hydrolases"/>
    <property type="match status" value="1"/>
</dbReference>
<dbReference type="InterPro" id="IPR001365">
    <property type="entry name" value="A_deaminase_dom"/>
</dbReference>
<dbReference type="InterPro" id="IPR013659">
    <property type="entry name" value="A_deaminase_N"/>
</dbReference>
<dbReference type="InterPro" id="IPR006331">
    <property type="entry name" value="ADGF"/>
</dbReference>
<dbReference type="InterPro" id="IPR006330">
    <property type="entry name" value="Ado/ade_deaminase"/>
</dbReference>
<dbReference type="InterPro" id="IPR032466">
    <property type="entry name" value="Metal_Hydrolase"/>
</dbReference>
<dbReference type="NCBIfam" id="TIGR01431">
    <property type="entry name" value="adm_rel"/>
    <property type="match status" value="1"/>
</dbReference>
<dbReference type="PANTHER" id="PTHR11409">
    <property type="entry name" value="ADENOSINE DEAMINASE"/>
    <property type="match status" value="1"/>
</dbReference>
<dbReference type="PANTHER" id="PTHR11409:SF39">
    <property type="entry name" value="ADENOSINE DEAMINASE 2"/>
    <property type="match status" value="1"/>
</dbReference>
<dbReference type="Pfam" id="PF00962">
    <property type="entry name" value="A_deaminase"/>
    <property type="match status" value="1"/>
</dbReference>
<dbReference type="Pfam" id="PF08451">
    <property type="entry name" value="A_deaminase_N"/>
    <property type="match status" value="1"/>
</dbReference>
<dbReference type="SUPFAM" id="SSF51556">
    <property type="entry name" value="Metallo-dependent hydrolases"/>
    <property type="match status" value="1"/>
</dbReference>
<feature type="signal peptide" evidence="2">
    <location>
        <begin position="1"/>
        <end position="19"/>
    </location>
</feature>
<feature type="chain" id="PRO_5004259135" description="Adenosine deaminase" evidence="2">
    <location>
        <begin position="20"/>
        <end position="533"/>
    </location>
</feature>
<proteinExistence type="evidence at protein level"/>
<sequence length="533" mass="61577">MKILLAVVFVLNLTNLAVPQHLITSSPSLPESKPVGRRPTYEEYKQQRESFLQTEDHHLLGANVTLTENEQLVNKFIMQMKLDEMEKGFNDSYNFIPARHIFEVLDRFGQSKVFNVIRRLPKGGVLHAHDMALGSTDLIVNATYLENLWQKGNFGLNHGPEFKFSRERPGKEWSLVSEIRQWMTNEVYDAKVAEVFSLYNADPLNAYKSLDNVWSKFQNLFACLAPLITFAPVWRQYYHDSLKQFYDDHVQYLEFRGVLPEVYDLDGKVYSAEEIVQLYYEETEQFKAKYPDFIGVKFIYAPGRYASDEEFQKLLDTTNRLHKKFPNFLAGFDLVGQEDPGRSLFEFAPALLKLPASINFFFHAGETNWYGMKTDQNLVDAVLLGTKRIGHGFAVLKHPKVLKEIKRRQICIEINPISNQVLKLVQDQRNHPAALLFSDNYPVVVSSDDPSFGRSTPLSHDFYVAFTGIASAKQDWRWLKQLALNSIEYSAMNSEEKTVAKEKWNQAWDHQFSRLAVDFVAGKILENWIMKIV</sequence>